<feature type="chain" id="PRO_0000085064" description="Carnitine monooxygenase oxygenase subunit">
    <location>
        <begin position="1"/>
        <end position="374"/>
    </location>
</feature>
<feature type="domain" description="Rieske" evidence="1">
    <location>
        <begin position="47"/>
        <end position="155"/>
    </location>
</feature>
<feature type="binding site" evidence="1">
    <location>
        <position position="89"/>
    </location>
    <ligand>
        <name>[2Fe-2S] cluster</name>
        <dbReference type="ChEBI" id="CHEBI:190135"/>
    </ligand>
</feature>
<feature type="binding site" evidence="1">
    <location>
        <position position="91"/>
    </location>
    <ligand>
        <name>[2Fe-2S] cluster</name>
        <dbReference type="ChEBI" id="CHEBI:190135"/>
    </ligand>
</feature>
<feature type="binding site" evidence="1">
    <location>
        <position position="109"/>
    </location>
    <ligand>
        <name>[2Fe-2S] cluster</name>
        <dbReference type="ChEBI" id="CHEBI:190135"/>
    </ligand>
</feature>
<feature type="binding site" evidence="1">
    <location>
        <position position="112"/>
    </location>
    <ligand>
        <name>[2Fe-2S] cluster</name>
        <dbReference type="ChEBI" id="CHEBI:190135"/>
    </ligand>
</feature>
<feature type="binding site" evidence="1">
    <location>
        <position position="211"/>
    </location>
    <ligand>
        <name>Fe cation</name>
        <dbReference type="ChEBI" id="CHEBI:24875"/>
    </ligand>
</feature>
<feature type="binding site" evidence="1">
    <location>
        <position position="216"/>
    </location>
    <ligand>
        <name>Fe cation</name>
        <dbReference type="ChEBI" id="CHEBI:24875"/>
    </ligand>
</feature>
<feature type="binding site" evidence="1">
    <location>
        <position position="325"/>
    </location>
    <ligand>
        <name>Fe cation</name>
        <dbReference type="ChEBI" id="CHEBI:24875"/>
    </ligand>
</feature>
<sequence>MSNLSPDFVLPENFCANPQEAWTIPARFYTDQNAFEHEKENVFAKSWICVAHSSELANANDYVTREIIGESIVLVRGRDKVLRAFYNVCPHRGHQLLSGEGKAKNVITCPYHAWAFKLDGNLAHARNCENVANFDSDKAQLVPVRLEEYAGFVFINMDPNATSVEDQLPGLGAKVLEACPEVHDLKLAARFTTRTPANWKNIVDNYLECYHCGPAHPGFSDSVQVDRYWHTMHGNWTLQYGFAKPSEQSFKFEEGTDAAFHGFWLWPCTMLNVTPIKGMMTVIYEFPVDSETTLQNYDIYFTNEELTDEQKSLIEWYRDVFRPEDLRLVESVQKGLKSRGYRGQGRIMADSSGSGISEHGIAHFHNLLAQVFKD</sequence>
<keyword id="KW-0001">2Fe-2S</keyword>
<keyword id="KW-0408">Iron</keyword>
<keyword id="KW-0411">Iron-sulfur</keyword>
<keyword id="KW-0479">Metal-binding</keyword>
<keyword id="KW-0520">NAD</keyword>
<keyword id="KW-0521">NADP</keyword>
<keyword id="KW-0560">Oxidoreductase</keyword>
<keyword id="KW-1185">Reference proteome</keyword>
<organism>
    <name type="scientific">Escherichia coli O157:H7</name>
    <dbReference type="NCBI Taxonomy" id="83334"/>
    <lineage>
        <taxon>Bacteria</taxon>
        <taxon>Pseudomonadati</taxon>
        <taxon>Pseudomonadota</taxon>
        <taxon>Gammaproteobacteria</taxon>
        <taxon>Enterobacterales</taxon>
        <taxon>Enterobacteriaceae</taxon>
        <taxon>Escherichia</taxon>
    </lineage>
</organism>
<gene>
    <name type="primary">yeaW</name>
    <name type="ordered locus">Z2845</name>
    <name type="ordered locus">ECs2511</name>
</gene>
<protein>
    <recommendedName>
        <fullName evidence="1">Carnitine monooxygenase oxygenase subunit</fullName>
        <ecNumber evidence="1">1.14.13.239</ecNumber>
    </recommendedName>
    <alternativeName>
        <fullName evidence="1">Carnitine monooxygenase alpha subunit</fullName>
    </alternativeName>
</protein>
<accession>P0ABR8</accession>
<accession>P76253</accession>
<reference key="1">
    <citation type="journal article" date="2001" name="Nature">
        <title>Genome sequence of enterohaemorrhagic Escherichia coli O157:H7.</title>
        <authorList>
            <person name="Perna N.T."/>
            <person name="Plunkett G. III"/>
            <person name="Burland V."/>
            <person name="Mau B."/>
            <person name="Glasner J.D."/>
            <person name="Rose D.J."/>
            <person name="Mayhew G.F."/>
            <person name="Evans P.S."/>
            <person name="Gregor J."/>
            <person name="Kirkpatrick H.A."/>
            <person name="Posfai G."/>
            <person name="Hackett J."/>
            <person name="Klink S."/>
            <person name="Boutin A."/>
            <person name="Shao Y."/>
            <person name="Miller L."/>
            <person name="Grotbeck E.J."/>
            <person name="Davis N.W."/>
            <person name="Lim A."/>
            <person name="Dimalanta E.T."/>
            <person name="Potamousis K."/>
            <person name="Apodaca J."/>
            <person name="Anantharaman T.S."/>
            <person name="Lin J."/>
            <person name="Yen G."/>
            <person name="Schwartz D.C."/>
            <person name="Welch R.A."/>
            <person name="Blattner F.R."/>
        </authorList>
    </citation>
    <scope>NUCLEOTIDE SEQUENCE [LARGE SCALE GENOMIC DNA]</scope>
    <source>
        <strain>O157:H7 / EDL933 / ATCC 700927 / EHEC</strain>
    </source>
</reference>
<reference key="2">
    <citation type="journal article" date="2001" name="DNA Res.">
        <title>Complete genome sequence of enterohemorrhagic Escherichia coli O157:H7 and genomic comparison with a laboratory strain K-12.</title>
        <authorList>
            <person name="Hayashi T."/>
            <person name="Makino K."/>
            <person name="Ohnishi M."/>
            <person name="Kurokawa K."/>
            <person name="Ishii K."/>
            <person name="Yokoyama K."/>
            <person name="Han C.-G."/>
            <person name="Ohtsubo E."/>
            <person name="Nakayama K."/>
            <person name="Murata T."/>
            <person name="Tanaka M."/>
            <person name="Tobe T."/>
            <person name="Iida T."/>
            <person name="Takami H."/>
            <person name="Honda T."/>
            <person name="Sasakawa C."/>
            <person name="Ogasawara N."/>
            <person name="Yasunaga T."/>
            <person name="Kuhara S."/>
            <person name="Shiba T."/>
            <person name="Hattori M."/>
            <person name="Shinagawa H."/>
        </authorList>
    </citation>
    <scope>NUCLEOTIDE SEQUENCE [LARGE SCALE GENOMIC DNA]</scope>
    <source>
        <strain>O157:H7 / Sakai / RIMD 0509952 / EHEC</strain>
    </source>
</reference>
<proteinExistence type="inferred from homology"/>
<comment type="function">
    <text evidence="1">Converts carnitine to trimethylamine and malic semialdehyde.</text>
</comment>
<comment type="catalytic activity">
    <reaction evidence="1">
        <text>(R)-carnitine + NADH + O2 + H(+) = (3R)-3-hydroxy-4-oxobutanoate + trimethylamine + NAD(+) + H2O</text>
        <dbReference type="Rhea" id="RHEA:55396"/>
        <dbReference type="ChEBI" id="CHEBI:15377"/>
        <dbReference type="ChEBI" id="CHEBI:15378"/>
        <dbReference type="ChEBI" id="CHEBI:15379"/>
        <dbReference type="ChEBI" id="CHEBI:16347"/>
        <dbReference type="ChEBI" id="CHEBI:57540"/>
        <dbReference type="ChEBI" id="CHEBI:57945"/>
        <dbReference type="ChEBI" id="CHEBI:58389"/>
        <dbReference type="ChEBI" id="CHEBI:138809"/>
        <dbReference type="EC" id="1.14.13.239"/>
    </reaction>
</comment>
<comment type="catalytic activity">
    <reaction evidence="1">
        <text>(R)-carnitine + NADPH + O2 + H(+) = (3R)-3-hydroxy-4-oxobutanoate + trimethylamine + NADP(+) + H2O</text>
        <dbReference type="Rhea" id="RHEA:55368"/>
        <dbReference type="ChEBI" id="CHEBI:15377"/>
        <dbReference type="ChEBI" id="CHEBI:15378"/>
        <dbReference type="ChEBI" id="CHEBI:15379"/>
        <dbReference type="ChEBI" id="CHEBI:16347"/>
        <dbReference type="ChEBI" id="CHEBI:57783"/>
        <dbReference type="ChEBI" id="CHEBI:58349"/>
        <dbReference type="ChEBI" id="CHEBI:58389"/>
        <dbReference type="ChEBI" id="CHEBI:138809"/>
        <dbReference type="EC" id="1.14.13.239"/>
    </reaction>
</comment>
<comment type="cofactor">
    <cofactor evidence="1">
        <name>[2Fe-2S] cluster</name>
        <dbReference type="ChEBI" id="CHEBI:190135"/>
    </cofactor>
    <text evidence="1">Binds 1 [2Fe-2S] cluster per subunit.</text>
</comment>
<comment type="cofactor">
    <cofactor evidence="1">
        <name>Fe cation</name>
        <dbReference type="ChEBI" id="CHEBI:24875"/>
    </cofactor>
    <text evidence="1">Binds 1 Fe cation per subunit.</text>
</comment>
<comment type="pathway">
    <text evidence="1">Amine and polyamine metabolism; carnitine metabolism.</text>
</comment>
<comment type="subunit">
    <text evidence="1">Composed of an oxygenase subunit and a reductase subunit.</text>
</comment>
<comment type="similarity">
    <text evidence="1">Belongs to the bacterial ring-hydroxylating dioxygenase alpha subunit family. CntA subfamily.</text>
</comment>
<dbReference type="EC" id="1.14.13.239" evidence="1"/>
<dbReference type="EMBL" id="AE005174">
    <property type="protein sequence ID" value="AAG56791.1"/>
    <property type="molecule type" value="Genomic_DNA"/>
</dbReference>
<dbReference type="EMBL" id="BA000007">
    <property type="protein sequence ID" value="BAB35934.1"/>
    <property type="molecule type" value="Genomic_DNA"/>
</dbReference>
<dbReference type="PIR" id="C85791">
    <property type="entry name" value="C85791"/>
</dbReference>
<dbReference type="PIR" id="G90942">
    <property type="entry name" value="G90942"/>
</dbReference>
<dbReference type="RefSeq" id="NP_310538.1">
    <property type="nucleotide sequence ID" value="NC_002695.1"/>
</dbReference>
<dbReference type="RefSeq" id="WP_000067822.1">
    <property type="nucleotide sequence ID" value="NZ_VOAI01000010.1"/>
</dbReference>
<dbReference type="SMR" id="P0ABR8"/>
<dbReference type="STRING" id="155864.Z2845"/>
<dbReference type="GeneID" id="912476"/>
<dbReference type="GeneID" id="93776050"/>
<dbReference type="KEGG" id="ece:Z2845"/>
<dbReference type="KEGG" id="ecs:ECs_2511"/>
<dbReference type="PATRIC" id="fig|386585.9.peg.2631"/>
<dbReference type="eggNOG" id="COG4638">
    <property type="taxonomic scope" value="Bacteria"/>
</dbReference>
<dbReference type="HOGENOM" id="CLU_026244_3_0_6"/>
<dbReference type="OMA" id="SEVECNW"/>
<dbReference type="UniPathway" id="UPA00117"/>
<dbReference type="Proteomes" id="UP000000558">
    <property type="component" value="Chromosome"/>
</dbReference>
<dbReference type="Proteomes" id="UP000002519">
    <property type="component" value="Chromosome"/>
</dbReference>
<dbReference type="GO" id="GO:0051537">
    <property type="term" value="F:2 iron, 2 sulfur cluster binding"/>
    <property type="evidence" value="ECO:0007669"/>
    <property type="project" value="UniProtKB-UniRule"/>
</dbReference>
<dbReference type="GO" id="GO:0005506">
    <property type="term" value="F:iron ion binding"/>
    <property type="evidence" value="ECO:0007669"/>
    <property type="project" value="InterPro"/>
</dbReference>
<dbReference type="GO" id="GO:0016709">
    <property type="term" value="F:oxidoreductase activity, acting on paired donors, with incorporation or reduction of molecular oxygen, NAD(P)H as one donor, and incorporation of one atom of oxygen"/>
    <property type="evidence" value="ECO:0007669"/>
    <property type="project" value="UniProtKB-UniRule"/>
</dbReference>
<dbReference type="GO" id="GO:0009437">
    <property type="term" value="P:carnitine metabolic process"/>
    <property type="evidence" value="ECO:0007669"/>
    <property type="project" value="UniProtKB-UniRule"/>
</dbReference>
<dbReference type="CDD" id="cd08886">
    <property type="entry name" value="RHO_alpha_C_2"/>
    <property type="match status" value="1"/>
</dbReference>
<dbReference type="CDD" id="cd03469">
    <property type="entry name" value="Rieske_RO_Alpha_N"/>
    <property type="match status" value="1"/>
</dbReference>
<dbReference type="FunFam" id="3.90.380.10:FF:000002">
    <property type="entry name" value="Carnitine monooxygenase oxygenase subunit"/>
    <property type="match status" value="1"/>
</dbReference>
<dbReference type="Gene3D" id="3.90.380.10">
    <property type="entry name" value="Naphthalene 1,2-dioxygenase Alpha Subunit, Chain A, domain 1"/>
    <property type="match status" value="2"/>
</dbReference>
<dbReference type="Gene3D" id="2.102.10.10">
    <property type="entry name" value="Rieske [2Fe-2S] iron-sulphur domain"/>
    <property type="match status" value="1"/>
</dbReference>
<dbReference type="HAMAP" id="MF_02097">
    <property type="entry name" value="Carnitine_monoox_A"/>
    <property type="match status" value="1"/>
</dbReference>
<dbReference type="InterPro" id="IPR039004">
    <property type="entry name" value="Carnitine_monoox_A"/>
</dbReference>
<dbReference type="InterPro" id="IPR017941">
    <property type="entry name" value="Rieske_2Fe-2S"/>
</dbReference>
<dbReference type="InterPro" id="IPR036922">
    <property type="entry name" value="Rieske_2Fe-2S_sf"/>
</dbReference>
<dbReference type="InterPro" id="IPR015881">
    <property type="entry name" value="Ring-hydroxy_dOase_2Fe2S_BS"/>
</dbReference>
<dbReference type="InterPro" id="IPR015879">
    <property type="entry name" value="Ring_hydroxy_dOase_asu_C_dom"/>
</dbReference>
<dbReference type="InterPro" id="IPR001663">
    <property type="entry name" value="Rng_hydr_dOase-A"/>
</dbReference>
<dbReference type="PANTHER" id="PTHR43756">
    <property type="entry name" value="CHOLINE MONOOXYGENASE, CHLOROPLASTIC"/>
    <property type="match status" value="1"/>
</dbReference>
<dbReference type="PANTHER" id="PTHR43756:SF5">
    <property type="entry name" value="CHOLINE MONOOXYGENASE, CHLOROPLASTIC"/>
    <property type="match status" value="1"/>
</dbReference>
<dbReference type="Pfam" id="PF00355">
    <property type="entry name" value="Rieske"/>
    <property type="match status" value="1"/>
</dbReference>
<dbReference type="Pfam" id="PF00848">
    <property type="entry name" value="Ring_hydroxyl_A"/>
    <property type="match status" value="1"/>
</dbReference>
<dbReference type="PRINTS" id="PR00090">
    <property type="entry name" value="RNGDIOXGNASE"/>
</dbReference>
<dbReference type="SUPFAM" id="SSF55961">
    <property type="entry name" value="Bet v1-like"/>
    <property type="match status" value="1"/>
</dbReference>
<dbReference type="SUPFAM" id="SSF50022">
    <property type="entry name" value="ISP domain"/>
    <property type="match status" value="1"/>
</dbReference>
<dbReference type="PROSITE" id="PS51296">
    <property type="entry name" value="RIESKE"/>
    <property type="match status" value="1"/>
</dbReference>
<dbReference type="PROSITE" id="PS00570">
    <property type="entry name" value="RING_HYDROXYL_ALPHA"/>
    <property type="match status" value="1"/>
</dbReference>
<name>CNTA_ECO57</name>
<evidence type="ECO:0000255" key="1">
    <source>
        <dbReference type="HAMAP-Rule" id="MF_02097"/>
    </source>
</evidence>